<sequence length="862" mass="96649">MQRAALFGGGDAQMAAGDLGELLVPYMPTIRVPKSGDRVYKTECAFSYDSPDSEGGLYVCMNTFLGFGREHIERHYRKTGQCVYLHLKRHVIEKVPGASGGALPKRRNAKLFLDLEANGDLSSDDFEYEDEAKLVIFPDHYEISLPNIEELPALVTIASDALLSAKSPYRKQDPDSWEEELQASKHAKSLVQLDNGVRIPPSGWKCSKCDLRENLWLNLTDGSVLCGKWFFDGSGGNGHAMEHYKETGYPLAVKLGTITPDGADVYSFDEEEPVLDPHIAKHLAHFGIDMLQMQVAENGLRDNDIKPRVSEWEVIQEAGVKLKPMYGPGYTGMKNLGNSCYLNAVMQAIFSIPEFQRAYVGNLPRIFDYSPLDPTQDFNTQMAKLGHGLLSGQYSKPPMKSELIEQVMKEEHKPQQNGISPQMFKAFISKDHTEFSSNRQQDAQEFFLHLINLVERNPVGSENPSDVFRFLVEERTQCCQSRKVRYTERVDYIMQLPVAMEAATNKDELIAYELKRREAEAARRAPPELVRAKIPFSACLQAFSEPTNVEDFWSSALQAKSAGVKTSRFASFPQYLVVQIKKFTFGLDWIPKKLDVSIDMPDFLDISHLRAMGLQPGEEELPDIAPPIIIPEDPKDRMMNNFVESLDIDESSVMQLAEMGFPLEACRKAVYYTGNLGAEVAFNWIIAHMEEPDFAEPLVVPVFGGAASSGVAGLGAVGLDNQPPEEMVSIIISMGFQRSLAIQALKATNNNLERALEWIFSHPELEEEDGEPALNVMDLENHTNANILAEARSEGPRIKDGPGRYELFGFISHMGTSTMSGHYVCHLKKEGRWVIYNDLRVCASERPPKDLGYIYFYHRIPS</sequence>
<organism>
    <name type="scientific">Gallus gallus</name>
    <name type="common">Chicken</name>
    <dbReference type="NCBI Taxonomy" id="9031"/>
    <lineage>
        <taxon>Eukaryota</taxon>
        <taxon>Metazoa</taxon>
        <taxon>Chordata</taxon>
        <taxon>Craniata</taxon>
        <taxon>Vertebrata</taxon>
        <taxon>Euteleostomi</taxon>
        <taxon>Archelosauria</taxon>
        <taxon>Archosauria</taxon>
        <taxon>Dinosauria</taxon>
        <taxon>Saurischia</taxon>
        <taxon>Theropoda</taxon>
        <taxon>Coelurosauria</taxon>
        <taxon>Aves</taxon>
        <taxon>Neognathae</taxon>
        <taxon>Galloanserae</taxon>
        <taxon>Galliformes</taxon>
        <taxon>Phasianidae</taxon>
        <taxon>Phasianinae</taxon>
        <taxon>Gallus</taxon>
    </lineage>
</organism>
<feature type="chain" id="PRO_0000418012" description="Ubiquitin carboxyl-terminal hydrolase 13">
    <location>
        <begin position="1"/>
        <end position="862"/>
    </location>
</feature>
<feature type="domain" description="USP">
    <location>
        <begin position="331"/>
        <end position="860"/>
    </location>
</feature>
<feature type="domain" description="UBA 1" evidence="3">
    <location>
        <begin position="647"/>
        <end position="688"/>
    </location>
</feature>
<feature type="domain" description="UBA 2" evidence="3">
    <location>
        <begin position="722"/>
        <end position="762"/>
    </location>
</feature>
<feature type="zinc finger region" description="UBP-type; degenerate" evidence="4">
    <location>
        <begin position="182"/>
        <end position="290"/>
    </location>
</feature>
<feature type="active site" description="Nucleophile" evidence="5 6">
    <location>
        <position position="340"/>
    </location>
</feature>
<feature type="active site" description="Proton acceptor" evidence="5 6">
    <location>
        <position position="822"/>
    </location>
</feature>
<feature type="binding site" evidence="4">
    <location>
        <position position="206"/>
    </location>
    <ligand>
        <name>Zn(2+)</name>
        <dbReference type="ChEBI" id="CHEBI:29105"/>
    </ligand>
</feature>
<feature type="binding site" evidence="4">
    <location>
        <position position="209"/>
    </location>
    <ligand>
        <name>Zn(2+)</name>
        <dbReference type="ChEBI" id="CHEBI:29105"/>
    </ligand>
</feature>
<feature type="binding site" evidence="4">
    <location>
        <position position="226"/>
    </location>
    <ligand>
        <name>Zn(2+)</name>
        <dbReference type="ChEBI" id="CHEBI:29105"/>
    </ligand>
</feature>
<feature type="binding site" evidence="4">
    <location>
        <position position="239"/>
    </location>
    <ligand>
        <name>Zn(2+)</name>
        <dbReference type="ChEBI" id="CHEBI:29105"/>
    </ligand>
</feature>
<name>UBP13_CHICK</name>
<comment type="function">
    <text evidence="2">Deubiquitinase that mediates deubiquitination of target proteins and is involved in various processes such as autophagy and endoplasmic reticulum-associated degradation (ERAD).</text>
</comment>
<comment type="catalytic activity">
    <reaction>
        <text>Thiol-dependent hydrolysis of ester, thioester, amide, peptide and isopeptide bonds formed by the C-terminal Gly of ubiquitin (a 76-residue protein attached to proteins as an intracellular targeting signal).</text>
        <dbReference type="EC" id="3.4.19.12"/>
    </reaction>
</comment>
<comment type="activity regulation">
    <text evidence="1">Specifically inhibited by spautin-1 (specific and potent autophagy inhibitor-1), a derivative of MBCQ that binds to USP13 and inhibits deubiquitinase activity.</text>
</comment>
<comment type="domain">
    <text evidence="1">The UBP-type zinc finger has lost its ability to bind ubiquitin and USP13 is not activated by unanchored ubiquitin.</text>
</comment>
<comment type="domain">
    <text evidence="1">The UBA domains mediate binding to ubiquitin.</text>
</comment>
<comment type="similarity">
    <text evidence="7">Belongs to the peptidase C19 family.</text>
</comment>
<proteinExistence type="inferred from homology"/>
<dbReference type="EC" id="3.4.19.12"/>
<dbReference type="EMBL" id="AADN02020803">
    <property type="status" value="NOT_ANNOTATED_CDS"/>
    <property type="molecule type" value="Genomic_DNA"/>
</dbReference>
<dbReference type="EMBL" id="AADN02020804">
    <property type="status" value="NOT_ANNOTATED_CDS"/>
    <property type="molecule type" value="Genomic_DNA"/>
</dbReference>
<dbReference type="EMBL" id="AADN02020805">
    <property type="status" value="NOT_ANNOTATED_CDS"/>
    <property type="molecule type" value="Genomic_DNA"/>
</dbReference>
<dbReference type="EMBL" id="AADN02020806">
    <property type="status" value="NOT_ANNOTATED_CDS"/>
    <property type="molecule type" value="Genomic_DNA"/>
</dbReference>
<dbReference type="RefSeq" id="NP_001292032.2">
    <property type="nucleotide sequence ID" value="NM_001305103.2"/>
</dbReference>
<dbReference type="SMR" id="E1BY77"/>
<dbReference type="FunCoup" id="E1BY77">
    <property type="interactions" value="820"/>
</dbReference>
<dbReference type="STRING" id="9031.ENSGALP00000014471"/>
<dbReference type="PaxDb" id="9031-ENSGALP00000014471"/>
<dbReference type="Ensembl" id="ENSGALT00010043807.1">
    <property type="protein sequence ID" value="ENSGALP00010026057.1"/>
    <property type="gene ID" value="ENSGALG00010018123.1"/>
</dbReference>
<dbReference type="GeneID" id="429286"/>
<dbReference type="VEuPathDB" id="HostDB:geneid_429286"/>
<dbReference type="eggNOG" id="KOG0944">
    <property type="taxonomic scope" value="Eukaryota"/>
</dbReference>
<dbReference type="GeneTree" id="ENSGT00940000157401"/>
<dbReference type="HOGENOM" id="CLU_009884_1_0_1"/>
<dbReference type="InParanoid" id="E1BY77"/>
<dbReference type="OMA" id="ASTECAY"/>
<dbReference type="OrthoDB" id="361536at2759"/>
<dbReference type="PhylomeDB" id="E1BY77"/>
<dbReference type="TreeFam" id="TF300576"/>
<dbReference type="PRO" id="PR:E1BY77"/>
<dbReference type="Proteomes" id="UP000000539">
    <property type="component" value="Chromosome 9"/>
</dbReference>
<dbReference type="GO" id="GO:0005829">
    <property type="term" value="C:cytosol"/>
    <property type="evidence" value="ECO:0000318"/>
    <property type="project" value="GO_Central"/>
</dbReference>
<dbReference type="GO" id="GO:0005634">
    <property type="term" value="C:nucleus"/>
    <property type="evidence" value="ECO:0000318"/>
    <property type="project" value="GO_Central"/>
</dbReference>
<dbReference type="GO" id="GO:1904288">
    <property type="term" value="F:BAT3 complex binding"/>
    <property type="evidence" value="ECO:0007669"/>
    <property type="project" value="Ensembl"/>
</dbReference>
<dbReference type="GO" id="GO:0004843">
    <property type="term" value="F:cysteine-type deubiquitinase activity"/>
    <property type="evidence" value="ECO:0000250"/>
    <property type="project" value="UniProtKB"/>
</dbReference>
<dbReference type="GO" id="GO:0004197">
    <property type="term" value="F:cysteine-type endopeptidase activity"/>
    <property type="evidence" value="ECO:0000250"/>
    <property type="project" value="UniProtKB"/>
</dbReference>
<dbReference type="GO" id="GO:1990380">
    <property type="term" value="F:K48-linked deubiquitinase activity"/>
    <property type="evidence" value="ECO:0007669"/>
    <property type="project" value="Ensembl"/>
</dbReference>
<dbReference type="GO" id="GO:0070628">
    <property type="term" value="F:proteasome binding"/>
    <property type="evidence" value="ECO:0007669"/>
    <property type="project" value="Ensembl"/>
</dbReference>
<dbReference type="GO" id="GO:0051087">
    <property type="term" value="F:protein-folding chaperone binding"/>
    <property type="evidence" value="ECO:0007669"/>
    <property type="project" value="Ensembl"/>
</dbReference>
<dbReference type="GO" id="GO:0043130">
    <property type="term" value="F:ubiquitin binding"/>
    <property type="evidence" value="ECO:0000250"/>
    <property type="project" value="UniProtKB"/>
</dbReference>
<dbReference type="GO" id="GO:0031625">
    <property type="term" value="F:ubiquitin protein ligase binding"/>
    <property type="evidence" value="ECO:0007669"/>
    <property type="project" value="Ensembl"/>
</dbReference>
<dbReference type="GO" id="GO:0008270">
    <property type="term" value="F:zinc ion binding"/>
    <property type="evidence" value="ECO:0007669"/>
    <property type="project" value="UniProtKB-KW"/>
</dbReference>
<dbReference type="GO" id="GO:0006914">
    <property type="term" value="P:autophagy"/>
    <property type="evidence" value="ECO:0007669"/>
    <property type="project" value="UniProtKB-KW"/>
</dbReference>
<dbReference type="GO" id="GO:0008283">
    <property type="term" value="P:cell population proliferation"/>
    <property type="evidence" value="ECO:0000250"/>
    <property type="project" value="UniProtKB"/>
</dbReference>
<dbReference type="GO" id="GO:0036506">
    <property type="term" value="P:maintenance of unfolded protein"/>
    <property type="evidence" value="ECO:0007669"/>
    <property type="project" value="Ensembl"/>
</dbReference>
<dbReference type="GO" id="GO:1904294">
    <property type="term" value="P:positive regulation of ERAD pathway"/>
    <property type="evidence" value="ECO:0007669"/>
    <property type="project" value="Ensembl"/>
</dbReference>
<dbReference type="GO" id="GO:0035523">
    <property type="term" value="P:protein K29-linked deubiquitination"/>
    <property type="evidence" value="ECO:0007669"/>
    <property type="project" value="Ensembl"/>
</dbReference>
<dbReference type="GO" id="GO:0044313">
    <property type="term" value="P:protein K6-linked deubiquitination"/>
    <property type="evidence" value="ECO:0007669"/>
    <property type="project" value="Ensembl"/>
</dbReference>
<dbReference type="GO" id="GO:0070536">
    <property type="term" value="P:protein K63-linked deubiquitination"/>
    <property type="evidence" value="ECO:0000250"/>
    <property type="project" value="UniProtKB"/>
</dbReference>
<dbReference type="GO" id="GO:0050821">
    <property type="term" value="P:protein stabilization"/>
    <property type="evidence" value="ECO:0000250"/>
    <property type="project" value="UniProtKB"/>
</dbReference>
<dbReference type="GO" id="GO:0006508">
    <property type="term" value="P:proteolysis"/>
    <property type="evidence" value="ECO:0007669"/>
    <property type="project" value="UniProtKB-KW"/>
</dbReference>
<dbReference type="GO" id="GO:0010506">
    <property type="term" value="P:regulation of autophagy"/>
    <property type="evidence" value="ECO:0000250"/>
    <property type="project" value="UniProtKB"/>
</dbReference>
<dbReference type="GO" id="GO:0006355">
    <property type="term" value="P:regulation of DNA-templated transcription"/>
    <property type="evidence" value="ECO:0000250"/>
    <property type="project" value="UniProtKB"/>
</dbReference>
<dbReference type="GO" id="GO:0031647">
    <property type="term" value="P:regulation of protein stability"/>
    <property type="evidence" value="ECO:0000318"/>
    <property type="project" value="GO_Central"/>
</dbReference>
<dbReference type="CDD" id="cd02658">
    <property type="entry name" value="Peptidase_C19B"/>
    <property type="match status" value="1"/>
</dbReference>
<dbReference type="CDD" id="cd14384">
    <property type="entry name" value="UBA1_UBP13"/>
    <property type="match status" value="1"/>
</dbReference>
<dbReference type="CDD" id="cd14386">
    <property type="entry name" value="UBA2_UBP5"/>
    <property type="match status" value="1"/>
</dbReference>
<dbReference type="FunFam" id="1.10.8.10:FF:000016">
    <property type="entry name" value="Ubiquitin carboxyl-terminal hydrolase"/>
    <property type="match status" value="1"/>
</dbReference>
<dbReference type="FunFam" id="3.30.40.10:FF:000026">
    <property type="entry name" value="Ubiquitin carboxyl-terminal hydrolase"/>
    <property type="match status" value="1"/>
</dbReference>
<dbReference type="FunFam" id="3.30.40.10:FF:000770">
    <property type="entry name" value="Ubiquitin carboxyl-terminal hydrolase"/>
    <property type="match status" value="1"/>
</dbReference>
<dbReference type="FunFam" id="3.90.70.10:FF:000042">
    <property type="entry name" value="Ubiquitin carboxyl-terminal hydrolase"/>
    <property type="match status" value="1"/>
</dbReference>
<dbReference type="FunFam" id="3.90.70.10:FF:000063">
    <property type="entry name" value="Ubiquitin carboxyl-terminal hydrolase"/>
    <property type="match status" value="1"/>
</dbReference>
<dbReference type="Gene3D" id="3.90.70.10">
    <property type="entry name" value="Cysteine proteinases"/>
    <property type="match status" value="2"/>
</dbReference>
<dbReference type="Gene3D" id="1.10.8.10">
    <property type="entry name" value="DNA helicase RuvA subunit, C-terminal domain"/>
    <property type="match status" value="2"/>
</dbReference>
<dbReference type="Gene3D" id="3.30.40.10">
    <property type="entry name" value="Zinc/RING finger domain, C3HC4 (zinc finger)"/>
    <property type="match status" value="2"/>
</dbReference>
<dbReference type="InterPro" id="IPR038765">
    <property type="entry name" value="Papain-like_cys_pep_sf"/>
</dbReference>
<dbReference type="InterPro" id="IPR001394">
    <property type="entry name" value="Peptidase_C19_UCH"/>
</dbReference>
<dbReference type="InterPro" id="IPR050185">
    <property type="entry name" value="Ub_carboxyl-term_hydrolase"/>
</dbReference>
<dbReference type="InterPro" id="IPR015940">
    <property type="entry name" value="UBA"/>
</dbReference>
<dbReference type="InterPro" id="IPR009060">
    <property type="entry name" value="UBA-like_sf"/>
</dbReference>
<dbReference type="InterPro" id="IPR016652">
    <property type="entry name" value="Ubiquitinyl_hydrolase"/>
</dbReference>
<dbReference type="InterPro" id="IPR041432">
    <property type="entry name" value="UBP13_Znf-UBP_var"/>
</dbReference>
<dbReference type="InterPro" id="IPR018200">
    <property type="entry name" value="USP_CS"/>
</dbReference>
<dbReference type="InterPro" id="IPR028889">
    <property type="entry name" value="USP_dom"/>
</dbReference>
<dbReference type="InterPro" id="IPR013083">
    <property type="entry name" value="Znf_RING/FYVE/PHD"/>
</dbReference>
<dbReference type="InterPro" id="IPR001607">
    <property type="entry name" value="Znf_UBP"/>
</dbReference>
<dbReference type="PANTHER" id="PTHR21646">
    <property type="entry name" value="UBIQUITIN CARBOXYL-TERMINAL HYDROLASE"/>
    <property type="match status" value="1"/>
</dbReference>
<dbReference type="PANTHER" id="PTHR21646:SF105">
    <property type="entry name" value="UBIQUITIN CARBOXYL-TERMINAL HYDROLASE 13"/>
    <property type="match status" value="1"/>
</dbReference>
<dbReference type="Pfam" id="PF00627">
    <property type="entry name" value="UBA"/>
    <property type="match status" value="1"/>
</dbReference>
<dbReference type="Pfam" id="PF22562">
    <property type="entry name" value="UBA_7"/>
    <property type="match status" value="1"/>
</dbReference>
<dbReference type="Pfam" id="PF00443">
    <property type="entry name" value="UCH"/>
    <property type="match status" value="1"/>
</dbReference>
<dbReference type="Pfam" id="PF02148">
    <property type="entry name" value="zf-UBP"/>
    <property type="match status" value="1"/>
</dbReference>
<dbReference type="Pfam" id="PF17807">
    <property type="entry name" value="zf-UBP_var"/>
    <property type="match status" value="1"/>
</dbReference>
<dbReference type="PIRSF" id="PIRSF016308">
    <property type="entry name" value="UBP"/>
    <property type="match status" value="1"/>
</dbReference>
<dbReference type="SMART" id="SM00165">
    <property type="entry name" value="UBA"/>
    <property type="match status" value="2"/>
</dbReference>
<dbReference type="SMART" id="SM00290">
    <property type="entry name" value="ZnF_UBP"/>
    <property type="match status" value="1"/>
</dbReference>
<dbReference type="SUPFAM" id="SSF54001">
    <property type="entry name" value="Cysteine proteinases"/>
    <property type="match status" value="1"/>
</dbReference>
<dbReference type="SUPFAM" id="SSF57850">
    <property type="entry name" value="RING/U-box"/>
    <property type="match status" value="1"/>
</dbReference>
<dbReference type="SUPFAM" id="SSF46934">
    <property type="entry name" value="UBA-like"/>
    <property type="match status" value="1"/>
</dbReference>
<dbReference type="PROSITE" id="PS50030">
    <property type="entry name" value="UBA"/>
    <property type="match status" value="2"/>
</dbReference>
<dbReference type="PROSITE" id="PS00972">
    <property type="entry name" value="USP_1"/>
    <property type="match status" value="1"/>
</dbReference>
<dbReference type="PROSITE" id="PS00973">
    <property type="entry name" value="USP_2"/>
    <property type="match status" value="1"/>
</dbReference>
<dbReference type="PROSITE" id="PS50235">
    <property type="entry name" value="USP_3"/>
    <property type="match status" value="1"/>
</dbReference>
<dbReference type="PROSITE" id="PS50271">
    <property type="entry name" value="ZF_UBP"/>
    <property type="match status" value="1"/>
</dbReference>
<protein>
    <recommendedName>
        <fullName>Ubiquitin carboxyl-terminal hydrolase 13</fullName>
        <ecNumber>3.4.19.12</ecNumber>
    </recommendedName>
    <alternativeName>
        <fullName>Deubiquitinating enzyme 13</fullName>
    </alternativeName>
    <alternativeName>
        <fullName>Ubiquitin thioesterase 13</fullName>
    </alternativeName>
    <alternativeName>
        <fullName>Ubiquitin-specific-processing protease 13</fullName>
    </alternativeName>
</protein>
<keyword id="KW-0072">Autophagy</keyword>
<keyword id="KW-0378">Hydrolase</keyword>
<keyword id="KW-0479">Metal-binding</keyword>
<keyword id="KW-0645">Protease</keyword>
<keyword id="KW-1185">Reference proteome</keyword>
<keyword id="KW-0677">Repeat</keyword>
<keyword id="KW-0788">Thiol protease</keyword>
<keyword id="KW-0833">Ubl conjugation pathway</keyword>
<keyword id="KW-0862">Zinc</keyword>
<keyword id="KW-0863">Zinc-finger</keyword>
<reference key="1">
    <citation type="journal article" date="2004" name="Nature">
        <title>Sequence and comparative analysis of the chicken genome provide unique perspectives on vertebrate evolution.</title>
        <authorList>
            <person name="Hillier L.W."/>
            <person name="Miller W."/>
            <person name="Birney E."/>
            <person name="Warren W."/>
            <person name="Hardison R.C."/>
            <person name="Ponting C.P."/>
            <person name="Bork P."/>
            <person name="Burt D.W."/>
            <person name="Groenen M.A.M."/>
            <person name="Delany M.E."/>
            <person name="Dodgson J.B."/>
            <person name="Chinwalla A.T."/>
            <person name="Cliften P.F."/>
            <person name="Clifton S.W."/>
            <person name="Delehaunty K.D."/>
            <person name="Fronick C."/>
            <person name="Fulton R.S."/>
            <person name="Graves T.A."/>
            <person name="Kremitzki C."/>
            <person name="Layman D."/>
            <person name="Magrini V."/>
            <person name="McPherson J.D."/>
            <person name="Miner T.L."/>
            <person name="Minx P."/>
            <person name="Nash W.E."/>
            <person name="Nhan M.N."/>
            <person name="Nelson J.O."/>
            <person name="Oddy L.G."/>
            <person name="Pohl C.S."/>
            <person name="Randall-Maher J."/>
            <person name="Smith S.M."/>
            <person name="Wallis J.W."/>
            <person name="Yang S.-P."/>
            <person name="Romanov M.N."/>
            <person name="Rondelli C.M."/>
            <person name="Paton B."/>
            <person name="Smith J."/>
            <person name="Morrice D."/>
            <person name="Daniels L."/>
            <person name="Tempest H.G."/>
            <person name="Robertson L."/>
            <person name="Masabanda J.S."/>
            <person name="Griffin D.K."/>
            <person name="Vignal A."/>
            <person name="Fillon V."/>
            <person name="Jacobbson L."/>
            <person name="Kerje S."/>
            <person name="Andersson L."/>
            <person name="Crooijmans R.P."/>
            <person name="Aerts J."/>
            <person name="van der Poel J.J."/>
            <person name="Ellegren H."/>
            <person name="Caldwell R.B."/>
            <person name="Hubbard S.J."/>
            <person name="Grafham D.V."/>
            <person name="Kierzek A.M."/>
            <person name="McLaren S.R."/>
            <person name="Overton I.M."/>
            <person name="Arakawa H."/>
            <person name="Beattie K.J."/>
            <person name="Bezzubov Y."/>
            <person name="Boardman P.E."/>
            <person name="Bonfield J.K."/>
            <person name="Croning M.D.R."/>
            <person name="Davies R.M."/>
            <person name="Francis M.D."/>
            <person name="Humphray S.J."/>
            <person name="Scott C.E."/>
            <person name="Taylor R.G."/>
            <person name="Tickle C."/>
            <person name="Brown W.R.A."/>
            <person name="Rogers J."/>
            <person name="Buerstedde J.-M."/>
            <person name="Wilson S.A."/>
            <person name="Stubbs L."/>
            <person name="Ovcharenko I."/>
            <person name="Gordon L."/>
            <person name="Lucas S."/>
            <person name="Miller M.M."/>
            <person name="Inoko H."/>
            <person name="Shiina T."/>
            <person name="Kaufman J."/>
            <person name="Salomonsen J."/>
            <person name="Skjoedt K."/>
            <person name="Wong G.K.-S."/>
            <person name="Wang J."/>
            <person name="Liu B."/>
            <person name="Wang J."/>
            <person name="Yu J."/>
            <person name="Yang H."/>
            <person name="Nefedov M."/>
            <person name="Koriabine M."/>
            <person name="Dejong P.J."/>
            <person name="Goodstadt L."/>
            <person name="Webber C."/>
            <person name="Dickens N.J."/>
            <person name="Letunic I."/>
            <person name="Suyama M."/>
            <person name="Torrents D."/>
            <person name="von Mering C."/>
            <person name="Zdobnov E.M."/>
            <person name="Makova K."/>
            <person name="Nekrutenko A."/>
            <person name="Elnitski L."/>
            <person name="Eswara P."/>
            <person name="King D.C."/>
            <person name="Yang S.-P."/>
            <person name="Tyekucheva S."/>
            <person name="Radakrishnan A."/>
            <person name="Harris R.S."/>
            <person name="Chiaromonte F."/>
            <person name="Taylor J."/>
            <person name="He J."/>
            <person name="Rijnkels M."/>
            <person name="Griffiths-Jones S."/>
            <person name="Ureta-Vidal A."/>
            <person name="Hoffman M.M."/>
            <person name="Severin J."/>
            <person name="Searle S.M.J."/>
            <person name="Law A.S."/>
            <person name="Speed D."/>
            <person name="Waddington D."/>
            <person name="Cheng Z."/>
            <person name="Tuzun E."/>
            <person name="Eichler E."/>
            <person name="Bao Z."/>
            <person name="Flicek P."/>
            <person name="Shteynberg D.D."/>
            <person name="Brent M.R."/>
            <person name="Bye J.M."/>
            <person name="Huckle E.J."/>
            <person name="Chatterji S."/>
            <person name="Dewey C."/>
            <person name="Pachter L."/>
            <person name="Kouranov A."/>
            <person name="Mourelatos Z."/>
            <person name="Hatzigeorgiou A.G."/>
            <person name="Paterson A.H."/>
            <person name="Ivarie R."/>
            <person name="Brandstrom M."/>
            <person name="Axelsson E."/>
            <person name="Backstrom N."/>
            <person name="Berlin S."/>
            <person name="Webster M.T."/>
            <person name="Pourquie O."/>
            <person name="Reymond A."/>
            <person name="Ucla C."/>
            <person name="Antonarakis S.E."/>
            <person name="Long M."/>
            <person name="Emerson J.J."/>
            <person name="Betran E."/>
            <person name="Dupanloup I."/>
            <person name="Kaessmann H."/>
            <person name="Hinrichs A.S."/>
            <person name="Bejerano G."/>
            <person name="Furey T.S."/>
            <person name="Harte R.A."/>
            <person name="Raney B."/>
            <person name="Siepel A."/>
            <person name="Kent W.J."/>
            <person name="Haussler D."/>
            <person name="Eyras E."/>
            <person name="Castelo R."/>
            <person name="Abril J.F."/>
            <person name="Castellano S."/>
            <person name="Camara F."/>
            <person name="Parra G."/>
            <person name="Guigo R."/>
            <person name="Bourque G."/>
            <person name="Tesler G."/>
            <person name="Pevzner P.A."/>
            <person name="Smit A."/>
            <person name="Fulton L.A."/>
            <person name="Mardis E.R."/>
            <person name="Wilson R.K."/>
        </authorList>
    </citation>
    <scope>NUCLEOTIDE SEQUENCE [LARGE SCALE GENOMIC DNA]</scope>
    <source>
        <strain>Red jungle fowl</strain>
    </source>
</reference>
<gene>
    <name type="primary">USP13</name>
</gene>
<evidence type="ECO:0000250" key="1"/>
<evidence type="ECO:0000250" key="2">
    <source>
        <dbReference type="UniProtKB" id="Q92995"/>
    </source>
</evidence>
<evidence type="ECO:0000255" key="3">
    <source>
        <dbReference type="PROSITE-ProRule" id="PRU00212"/>
    </source>
</evidence>
<evidence type="ECO:0000255" key="4">
    <source>
        <dbReference type="PROSITE-ProRule" id="PRU00502"/>
    </source>
</evidence>
<evidence type="ECO:0000255" key="5">
    <source>
        <dbReference type="PROSITE-ProRule" id="PRU10092"/>
    </source>
</evidence>
<evidence type="ECO:0000255" key="6">
    <source>
        <dbReference type="PROSITE-ProRule" id="PRU10093"/>
    </source>
</evidence>
<evidence type="ECO:0000305" key="7"/>
<accession>E1BY77</accession>